<evidence type="ECO:0000250" key="1"/>
<evidence type="ECO:0000250" key="2">
    <source>
        <dbReference type="UniProtKB" id="Q8GZD5"/>
    </source>
</evidence>
<evidence type="ECO:0000255" key="3"/>
<evidence type="ECO:0000255" key="4">
    <source>
        <dbReference type="PROSITE-ProRule" id="PRU01098"/>
    </source>
</evidence>
<evidence type="ECO:0000255" key="5">
    <source>
        <dbReference type="PROSITE-ProRule" id="PRU10064"/>
    </source>
</evidence>
<evidence type="ECO:0000269" key="6">
    <source>
    </source>
</evidence>
<evidence type="ECO:0000269" key="7">
    <source>
    </source>
</evidence>
<evidence type="ECO:0000305" key="8"/>
<proteinExistence type="evidence at protein level"/>
<keyword id="KW-0052">Apoplast</keyword>
<keyword id="KW-0134">Cell wall</keyword>
<keyword id="KW-0961">Cell wall biogenesis/degradation</keyword>
<keyword id="KW-0903">Direct protein sequencing</keyword>
<keyword id="KW-1015">Disulfide bond</keyword>
<keyword id="KW-0325">Glycoprotein</keyword>
<keyword id="KW-0326">Glycosidase</keyword>
<keyword id="KW-0378">Hydrolase</keyword>
<keyword id="KW-1185">Reference proteome</keyword>
<keyword id="KW-0964">Secreted</keyword>
<keyword id="KW-0732">Signal</keyword>
<keyword id="KW-0808">Transferase</keyword>
<accession>Q76BW5</accession>
<accession>Q0J732</accession>
<accession>Q7M1Y6</accession>
<feature type="signal peptide" evidence="7">
    <location>
        <begin position="1"/>
        <end position="25"/>
    </location>
</feature>
<feature type="chain" id="PRO_0000011836" description="Xyloglucan endotransglycosylase/hydrolase protein 8">
    <location>
        <begin position="26"/>
        <end position="290"/>
    </location>
</feature>
<feature type="domain" description="GH16" evidence="4">
    <location>
        <begin position="26"/>
        <end position="218"/>
    </location>
</feature>
<feature type="active site" description="Nucleophile" evidence="5">
    <location>
        <position position="106"/>
    </location>
</feature>
<feature type="active site" description="Proton donor" evidence="5">
    <location>
        <position position="110"/>
    </location>
</feature>
<feature type="binding site" evidence="2">
    <location>
        <position position="110"/>
    </location>
    <ligand>
        <name>xyloglucan</name>
        <dbReference type="ChEBI" id="CHEBI:18233"/>
    </ligand>
</feature>
<feature type="binding site" evidence="2">
    <location>
        <begin position="123"/>
        <end position="125"/>
    </location>
    <ligand>
        <name>xyloglucan</name>
        <dbReference type="ChEBI" id="CHEBI:18233"/>
    </ligand>
</feature>
<feature type="binding site" evidence="2">
    <location>
        <begin position="133"/>
        <end position="135"/>
    </location>
    <ligand>
        <name>xyloglucan</name>
        <dbReference type="ChEBI" id="CHEBI:18233"/>
    </ligand>
</feature>
<feature type="binding site" evidence="2">
    <location>
        <begin position="197"/>
        <end position="198"/>
    </location>
    <ligand>
        <name>xyloglucan</name>
        <dbReference type="ChEBI" id="CHEBI:18233"/>
    </ligand>
</feature>
<feature type="binding site" evidence="2">
    <location>
        <position position="278"/>
    </location>
    <ligand>
        <name>xyloglucan</name>
        <dbReference type="ChEBI" id="CHEBI:18233"/>
    </ligand>
</feature>
<feature type="site" description="Important for catalytic activity" evidence="2">
    <location>
        <position position="108"/>
    </location>
</feature>
<feature type="glycosylation site" description="N-linked (GlcNAc...) asparagine" evidence="3">
    <location>
        <position position="114"/>
    </location>
</feature>
<feature type="disulfide bond" evidence="2">
    <location>
        <begin position="226"/>
        <end position="240"/>
    </location>
</feature>
<feature type="disulfide bond" evidence="2">
    <location>
        <begin position="273"/>
        <end position="287"/>
    </location>
</feature>
<feature type="sequence conflict" description="In Ref. 1." evidence="8" ref="1">
    <original>HRELDGAELGTVAWAERNYMSYNYCADGWRFPQGFPAECYRK</original>
    <variation>KKKKTKTKTKTRTRSNYKSLPRTHQWRRI</variation>
    <location>
        <begin position="249"/>
        <end position="290"/>
    </location>
</feature>
<organism>
    <name type="scientific">Oryza sativa subsp. japonica</name>
    <name type="common">Rice</name>
    <dbReference type="NCBI Taxonomy" id="39947"/>
    <lineage>
        <taxon>Eukaryota</taxon>
        <taxon>Viridiplantae</taxon>
        <taxon>Streptophyta</taxon>
        <taxon>Embryophyta</taxon>
        <taxon>Tracheophyta</taxon>
        <taxon>Spermatophyta</taxon>
        <taxon>Magnoliopsida</taxon>
        <taxon>Liliopsida</taxon>
        <taxon>Poales</taxon>
        <taxon>Poaceae</taxon>
        <taxon>BOP clade</taxon>
        <taxon>Oryzoideae</taxon>
        <taxon>Oryzeae</taxon>
        <taxon>Oryzinae</taxon>
        <taxon>Oryza</taxon>
        <taxon>Oryza sativa</taxon>
    </lineage>
</organism>
<dbReference type="EC" id="2.4.1.207"/>
<dbReference type="EMBL" id="AB110604">
    <property type="protein sequence ID" value="BAD06579.1"/>
    <property type="molecule type" value="mRNA"/>
</dbReference>
<dbReference type="EMBL" id="AP004705">
    <property type="protein sequence ID" value="BAD05469.1"/>
    <property type="molecule type" value="Genomic_DNA"/>
</dbReference>
<dbReference type="EMBL" id="AP008214">
    <property type="protein sequence ID" value="BAF23233.1"/>
    <property type="molecule type" value="Genomic_DNA"/>
</dbReference>
<dbReference type="EMBL" id="AP014964">
    <property type="protein sequence ID" value="BAT04470.1"/>
    <property type="molecule type" value="Genomic_DNA"/>
</dbReference>
<dbReference type="EMBL" id="AK060654">
    <property type="protein sequence ID" value="BAG87527.1"/>
    <property type="molecule type" value="mRNA"/>
</dbReference>
<dbReference type="EMBL" id="AK104451">
    <property type="protein sequence ID" value="BAG96694.1"/>
    <property type="molecule type" value="mRNA"/>
</dbReference>
<dbReference type="PIR" id="JE0156">
    <property type="entry name" value="JE0156"/>
</dbReference>
<dbReference type="RefSeq" id="XP_015650689.1">
    <property type="nucleotide sequence ID" value="XM_015795203.1"/>
</dbReference>
<dbReference type="SMR" id="Q76BW5"/>
<dbReference type="FunCoup" id="Q76BW5">
    <property type="interactions" value="47"/>
</dbReference>
<dbReference type="STRING" id="39947.Q76BW5"/>
<dbReference type="CAZy" id="GH16">
    <property type="family name" value="Glycoside Hydrolase Family 16"/>
</dbReference>
<dbReference type="GlyCosmos" id="Q76BW5">
    <property type="glycosylation" value="1 site, No reported glycans"/>
</dbReference>
<dbReference type="PaxDb" id="39947-Q76BW5"/>
<dbReference type="EnsemblPlants" id="Os08t0237000-01">
    <property type="protein sequence ID" value="Os08t0237000-01"/>
    <property type="gene ID" value="Os08g0237000"/>
</dbReference>
<dbReference type="Gramene" id="Os08t0237000-01">
    <property type="protein sequence ID" value="Os08t0237000-01"/>
    <property type="gene ID" value="Os08g0237000"/>
</dbReference>
<dbReference type="KEGG" id="dosa:Os08g0237000"/>
<dbReference type="eggNOG" id="ENOG502QQ71">
    <property type="taxonomic scope" value="Eukaryota"/>
</dbReference>
<dbReference type="HOGENOM" id="CLU_048041_0_1_1"/>
<dbReference type="InParanoid" id="Q76BW5"/>
<dbReference type="OMA" id="CPAGANE"/>
<dbReference type="OrthoDB" id="4781at2759"/>
<dbReference type="BRENDA" id="2.4.1.207">
    <property type="organism ID" value="4460"/>
</dbReference>
<dbReference type="Proteomes" id="UP000000763">
    <property type="component" value="Chromosome 8"/>
</dbReference>
<dbReference type="Proteomes" id="UP000059680">
    <property type="component" value="Chromosome 8"/>
</dbReference>
<dbReference type="GO" id="GO:0048046">
    <property type="term" value="C:apoplast"/>
    <property type="evidence" value="ECO:0007669"/>
    <property type="project" value="UniProtKB-SubCell"/>
</dbReference>
<dbReference type="GO" id="GO:0004553">
    <property type="term" value="F:hydrolase activity, hydrolyzing O-glycosyl compounds"/>
    <property type="evidence" value="ECO:0007669"/>
    <property type="project" value="InterPro"/>
</dbReference>
<dbReference type="GO" id="GO:0030247">
    <property type="term" value="F:polysaccharide binding"/>
    <property type="evidence" value="ECO:0000250"/>
    <property type="project" value="UniProtKB"/>
</dbReference>
<dbReference type="GO" id="GO:0016762">
    <property type="term" value="F:xyloglucan:xyloglucosyl transferase activity"/>
    <property type="evidence" value="ECO:0007669"/>
    <property type="project" value="UniProtKB-EC"/>
</dbReference>
<dbReference type="GO" id="GO:0042546">
    <property type="term" value="P:cell wall biogenesis"/>
    <property type="evidence" value="ECO:0007669"/>
    <property type="project" value="InterPro"/>
</dbReference>
<dbReference type="GO" id="GO:0071555">
    <property type="term" value="P:cell wall organization"/>
    <property type="evidence" value="ECO:0007669"/>
    <property type="project" value="UniProtKB-KW"/>
</dbReference>
<dbReference type="GO" id="GO:0010411">
    <property type="term" value="P:xyloglucan metabolic process"/>
    <property type="evidence" value="ECO:0007669"/>
    <property type="project" value="InterPro"/>
</dbReference>
<dbReference type="CDD" id="cd02176">
    <property type="entry name" value="GH16_XET"/>
    <property type="match status" value="1"/>
</dbReference>
<dbReference type="Gene3D" id="2.60.120.200">
    <property type="match status" value="1"/>
</dbReference>
<dbReference type="InterPro" id="IPR044791">
    <property type="entry name" value="Beta-glucanase/XTH"/>
</dbReference>
<dbReference type="InterPro" id="IPR008264">
    <property type="entry name" value="Beta_glucanase"/>
</dbReference>
<dbReference type="InterPro" id="IPR013320">
    <property type="entry name" value="ConA-like_dom_sf"/>
</dbReference>
<dbReference type="InterPro" id="IPR000757">
    <property type="entry name" value="GH16"/>
</dbReference>
<dbReference type="InterPro" id="IPR008263">
    <property type="entry name" value="GH16_AS"/>
</dbReference>
<dbReference type="InterPro" id="IPR010713">
    <property type="entry name" value="XET_C"/>
</dbReference>
<dbReference type="InterPro" id="IPR016455">
    <property type="entry name" value="XTH"/>
</dbReference>
<dbReference type="PANTHER" id="PTHR31062">
    <property type="entry name" value="XYLOGLUCAN ENDOTRANSGLUCOSYLASE/HYDROLASE PROTEIN 8-RELATED"/>
    <property type="match status" value="1"/>
</dbReference>
<dbReference type="Pfam" id="PF00722">
    <property type="entry name" value="Glyco_hydro_16"/>
    <property type="match status" value="1"/>
</dbReference>
<dbReference type="Pfam" id="PF06955">
    <property type="entry name" value="XET_C"/>
    <property type="match status" value="1"/>
</dbReference>
<dbReference type="PIRSF" id="PIRSF005604">
    <property type="entry name" value="XET"/>
    <property type="match status" value="1"/>
</dbReference>
<dbReference type="PRINTS" id="PR00737">
    <property type="entry name" value="GLHYDRLASE16"/>
</dbReference>
<dbReference type="SUPFAM" id="SSF49899">
    <property type="entry name" value="Concanavalin A-like lectins/glucanases"/>
    <property type="match status" value="1"/>
</dbReference>
<dbReference type="PROSITE" id="PS01034">
    <property type="entry name" value="GH16_1"/>
    <property type="match status" value="1"/>
</dbReference>
<dbReference type="PROSITE" id="PS51762">
    <property type="entry name" value="GH16_2"/>
    <property type="match status" value="1"/>
</dbReference>
<sequence>MAKHLALSVAAAVAVSWLAASSAAAAGFYEKFDVVGAGDHVRVVSDDGKTQQVALTLDRSSGSGFTSKDTYLFGEFSVQMKLVGGNSAGTVTSFYLSSGEGDGHDEIDIEFMGNLSGNPYVMNTNVWANGDGKKEHQFYLWFDPTADFHTYKIIWNPQNIIFQVDDVPVRTFKKYDDLAYPQSKPMRLHATLWDGSYWATRHGDVKIDWSGAPFVVSYRGYSTNACVNNNPAGGWSSSWCPEGTSAWIHRELDGAELGTVAWAERNYMSYNYCADGWRFPQGFPAECYRK</sequence>
<reference key="1">
    <citation type="journal article" date="1997" name="Rice Genet. Newsl.">
        <title>A cDNA clone from rice accelerated overgrowth (ao) mutant encoding xyloglucanrelated protein homolog.</title>
        <authorList>
            <person name="Aoki T."/>
            <person name="Kameya N."/>
            <person name="Nakamura I."/>
        </authorList>
    </citation>
    <scope>NUCLEOTIDE SEQUENCE [MRNA]</scope>
    <source>
        <strain>cv. Koshihikari</strain>
    </source>
</reference>
<reference key="2">
    <citation type="journal article" date="2004" name="Plant Physiol.">
        <title>Characterization of a xyloglucan endotransglucosylase gene that is up-regulated by gibberellin in rice.</title>
        <authorList>
            <person name="Jan A."/>
            <person name="Yang G."/>
            <person name="Nakamura H."/>
            <person name="Ichikawa H."/>
            <person name="Kitano H."/>
            <person name="Matsuoka M."/>
            <person name="Matsumoto H."/>
            <person name="Komatsu S."/>
        </authorList>
    </citation>
    <scope>NUCLEOTIDE SEQUENCE [MRNA]</scope>
    <scope>FUNCTION</scope>
    <scope>DISRUPTION PHENOTYPE</scope>
    <scope>INDUCTION</scope>
    <scope>TISSUE SPECIFICITY</scope>
    <source>
        <strain>cv. Gimbozu</strain>
        <strain>cv. Nipponbare</strain>
    </source>
</reference>
<reference key="3">
    <citation type="journal article" date="2005" name="Nature">
        <title>The map-based sequence of the rice genome.</title>
        <authorList>
            <consortium name="International rice genome sequencing project (IRGSP)"/>
        </authorList>
    </citation>
    <scope>NUCLEOTIDE SEQUENCE [LARGE SCALE GENOMIC DNA]</scope>
    <source>
        <strain>cv. Nipponbare</strain>
    </source>
</reference>
<reference key="4">
    <citation type="journal article" date="2008" name="Nucleic Acids Res.">
        <title>The rice annotation project database (RAP-DB): 2008 update.</title>
        <authorList>
            <consortium name="The rice annotation project (RAP)"/>
        </authorList>
    </citation>
    <scope>GENOME REANNOTATION</scope>
    <source>
        <strain>cv. Nipponbare</strain>
    </source>
</reference>
<reference key="5">
    <citation type="journal article" date="2013" name="Rice">
        <title>Improvement of the Oryza sativa Nipponbare reference genome using next generation sequence and optical map data.</title>
        <authorList>
            <person name="Kawahara Y."/>
            <person name="de la Bastide M."/>
            <person name="Hamilton J.P."/>
            <person name="Kanamori H."/>
            <person name="McCombie W.R."/>
            <person name="Ouyang S."/>
            <person name="Schwartz D.C."/>
            <person name="Tanaka T."/>
            <person name="Wu J."/>
            <person name="Zhou S."/>
            <person name="Childs K.L."/>
            <person name="Davidson R.M."/>
            <person name="Lin H."/>
            <person name="Quesada-Ocampo L."/>
            <person name="Vaillancourt B."/>
            <person name="Sakai H."/>
            <person name="Lee S.S."/>
            <person name="Kim J."/>
            <person name="Numa H."/>
            <person name="Itoh T."/>
            <person name="Buell C.R."/>
            <person name="Matsumoto T."/>
        </authorList>
    </citation>
    <scope>GENOME REANNOTATION</scope>
    <source>
        <strain>cv. Nipponbare</strain>
    </source>
</reference>
<reference key="6">
    <citation type="journal article" date="2003" name="Science">
        <title>Collection, mapping, and annotation of over 28,000 cDNA clones from japonica rice.</title>
        <authorList>
            <consortium name="The rice full-length cDNA consortium"/>
        </authorList>
    </citation>
    <scope>NUCLEOTIDE SEQUENCE [LARGE SCALE MRNA]</scope>
    <source>
        <strain>cv. Nipponbare</strain>
    </source>
</reference>
<reference key="7">
    <citation type="journal article" date="2006" name="Proteomics">
        <title>Proteomic analysis of rice leaf, stem and root tissues during growth course.</title>
        <authorList>
            <person name="Nozu Y."/>
            <person name="Tsugita A."/>
            <person name="Kamijo K."/>
        </authorList>
    </citation>
    <scope>PROTEIN SEQUENCE [LARGE SCALE ANALYSIS] OF 26-32</scope>
    <scope>IDENTIFICATION BY MASS SPECTROMETRY</scope>
    <source>
        <strain>cv. Nipponbare</strain>
    </source>
</reference>
<reference key="8">
    <citation type="journal article" date="2004" name="Plant Physiol.">
        <title>A surprising diversity and abundance of xyloglucan endotransglucosylase/hydrolases in rice. Classification and expression analysis.</title>
        <authorList>
            <person name="Yokoyama R."/>
            <person name="Rose J.K.C."/>
            <person name="Nishitani K."/>
        </authorList>
    </citation>
    <scope>GENE FAMILY</scope>
    <scope>LEVEL OF PROTEIN EXPRESSION</scope>
</reference>
<gene>
    <name type="primary">XTH8</name>
    <name type="synonym">XRT5</name>
    <name type="ordered locus">Os08g0237000</name>
    <name type="ordered locus">LOC_Os08g13920</name>
    <name type="ORF">P0682A06.17</name>
</gene>
<name>XTH8_ORYSJ</name>
<comment type="function">
    <text evidence="1 6">Catalyzes xyloglucan endohydrolysis (XEH) and/or endotransglycosylation (XET). Cleaves and religates xyloglucan polymers, an essential constituent of the primary cell wall, and thereby participates in cell wall construction of growing tissues (By similarity). May promote elongation of three internodes (II, III and IV) and may be involved in cell elongation processes.</text>
</comment>
<comment type="catalytic activity">
    <reaction>
        <text>breaks a beta-(1-&gt;4) bond in the backbone of a xyloglucan and transfers the xyloglucanyl segment on to O-4 of the non-reducing terminal glucose residue of an acceptor, which can be a xyloglucan or an oligosaccharide of xyloglucan.</text>
        <dbReference type="EC" id="2.4.1.207"/>
    </reaction>
</comment>
<comment type="subcellular location">
    <subcellularLocation>
        <location evidence="8">Secreted</location>
        <location evidence="8">Cell wall</location>
    </subcellularLocation>
    <subcellularLocation>
        <location evidence="8">Secreted</location>
        <location evidence="8">Extracellular space</location>
        <location evidence="8">Apoplast</location>
    </subcellularLocation>
</comment>
<comment type="tissue specificity">
    <text evidence="6">Transcript strongly detected in leaf sheaths. Weakly or not expressed in leaf blades, roots and calli. Accumulation of transcript detected in shoot apex meristem, vascular tissues, young leaves, vascular bundles of leaf sheaths, and peripheral cylinder of the vascular bundles and fibers in the nodal region.</text>
</comment>
<comment type="induction">
    <text evidence="6">By gibberellic acid (GA3). Accumulation continues to increase throughout 24 hours of GA3 treatment. Very little effect by other plant hormones like brassinolide (BL), 6-benzyladenine (BA), indole-3-acetic acid (IAA), and abscisic acid (ABA). Inhibitory effect from uniconazole, a potent GA biosynthesis inhibitor.</text>
</comment>
<comment type="PTM">
    <text evidence="1">Contains at least one intrachain disulfide bond essential for its enzymatic activity.</text>
</comment>
<comment type="disruption phenotype">
    <text evidence="6">Plants exhibit up to 50% growth reduction when they reach maturity.</text>
</comment>
<comment type="miscellaneous">
    <text>Lower level of XTH8 transcript detected in Tanginbozu, a GA-deficient semidwarf mutant, and higher level detected in Slender rice 1 (slr1), a GA-insensitive mutant showing a constitutive GA-response phenotype.</text>
</comment>
<comment type="similarity">
    <text evidence="8">Belongs to the glycosyl hydrolase 16 family. XTH group 2 subfamily.</text>
</comment>
<protein>
    <recommendedName>
        <fullName>Xyloglucan endotransglycosylase/hydrolase protein 8</fullName>
        <ecNumber>2.4.1.207</ecNumber>
    </recommendedName>
    <alternativeName>
        <fullName>End-xyloglucan transferase</fullName>
    </alternativeName>
    <alternativeName>
        <fullName>OsXRT5</fullName>
    </alternativeName>
    <alternativeName>
        <fullName>OsXTH8</fullName>
    </alternativeName>
</protein>